<evidence type="ECO:0000255" key="1">
    <source>
        <dbReference type="HAMAP-Rule" id="MF_01286"/>
    </source>
</evidence>
<sequence length="278" mass="31151">MDLKAYFELIRLKNCLTAGFGALISGLIASNFTFGALFPLILAFLVVFFICGFGNSLNDIYDLKIDRINKPFRPIPSKRISLTDAKVFSYSIMIFGLIISLFNIYCFLMAVLNAVVLQKYAKIYKKNKIIGNMLVAYLTGSVFIFGGIAVGNVNVSLYLFSCAMFSMWAREIIKDYEDIEGDLKEKVSSLPIKYGEKSIYISLGLLLIAIGLSFLPYLTGIFGIYYLLMILICNLMFLAGFFNLLNAPSKKQARKTSKNIKLITNFVLIAFIIGSIFK</sequence>
<name>DGGGP_METVS</name>
<feature type="chain" id="PRO_5000258363" description="Digeranylgeranylglyceryl phosphate synthase">
    <location>
        <begin position="1"/>
        <end position="278"/>
    </location>
</feature>
<feature type="transmembrane region" description="Helical" evidence="1">
    <location>
        <begin position="12"/>
        <end position="32"/>
    </location>
</feature>
<feature type="transmembrane region" description="Helical" evidence="1">
    <location>
        <begin position="34"/>
        <end position="54"/>
    </location>
</feature>
<feature type="transmembrane region" description="Helical" evidence="1">
    <location>
        <begin position="92"/>
        <end position="112"/>
    </location>
</feature>
<feature type="transmembrane region" description="Helical" evidence="1">
    <location>
        <begin position="129"/>
        <end position="149"/>
    </location>
</feature>
<feature type="transmembrane region" description="Helical" evidence="1">
    <location>
        <begin position="199"/>
        <end position="219"/>
    </location>
</feature>
<feature type="transmembrane region" description="Helical" evidence="1">
    <location>
        <begin position="221"/>
        <end position="241"/>
    </location>
</feature>
<feature type="transmembrane region" description="Helical" evidence="1">
    <location>
        <begin position="257"/>
        <end position="277"/>
    </location>
</feature>
<organism>
    <name type="scientific">Methanococcus vannielii (strain ATCC 35089 / DSM 1224 / JCM 13029 / OCM 148 / SB)</name>
    <dbReference type="NCBI Taxonomy" id="406327"/>
    <lineage>
        <taxon>Archaea</taxon>
        <taxon>Methanobacteriati</taxon>
        <taxon>Methanobacteriota</taxon>
        <taxon>Methanomada group</taxon>
        <taxon>Methanococci</taxon>
        <taxon>Methanococcales</taxon>
        <taxon>Methanococcaceae</taxon>
        <taxon>Methanococcus</taxon>
    </lineage>
</organism>
<reference key="1">
    <citation type="submission" date="2007-06" db="EMBL/GenBank/DDBJ databases">
        <title>Complete sequence of Methanococcus vannielii SB.</title>
        <authorList>
            <consortium name="US DOE Joint Genome Institute"/>
            <person name="Copeland A."/>
            <person name="Lucas S."/>
            <person name="Lapidus A."/>
            <person name="Barry K."/>
            <person name="Glavina del Rio T."/>
            <person name="Dalin E."/>
            <person name="Tice H."/>
            <person name="Pitluck S."/>
            <person name="Chain P."/>
            <person name="Malfatti S."/>
            <person name="Shin M."/>
            <person name="Vergez L."/>
            <person name="Schmutz J."/>
            <person name="Larimer F."/>
            <person name="Land M."/>
            <person name="Hauser L."/>
            <person name="Kyrpides N."/>
            <person name="Anderson I."/>
            <person name="Sieprawska-Lupa M."/>
            <person name="Whitman W.B."/>
            <person name="Richardson P."/>
        </authorList>
    </citation>
    <scope>NUCLEOTIDE SEQUENCE [LARGE SCALE GENOMIC DNA]</scope>
    <source>
        <strain>ATCC 35089 / DSM 1224 / JCM 13029 / OCM 148 / SB</strain>
    </source>
</reference>
<gene>
    <name type="ordered locus">Mevan_0977</name>
</gene>
<dbReference type="EC" id="2.5.1.42" evidence="1"/>
<dbReference type="EMBL" id="CP000742">
    <property type="protein sequence ID" value="ABR54880.1"/>
    <property type="molecule type" value="Genomic_DNA"/>
</dbReference>
<dbReference type="RefSeq" id="WP_012065809.1">
    <property type="nucleotide sequence ID" value="NC_009634.1"/>
</dbReference>
<dbReference type="SMR" id="A6UQV8"/>
<dbReference type="STRING" id="406327.Mevan_0977"/>
<dbReference type="GeneID" id="5325844"/>
<dbReference type="KEGG" id="mvn:Mevan_0977"/>
<dbReference type="eggNOG" id="arCOG00476">
    <property type="taxonomic scope" value="Archaea"/>
</dbReference>
<dbReference type="HOGENOM" id="CLU_073311_1_1_2"/>
<dbReference type="OrthoDB" id="11851at2157"/>
<dbReference type="UniPathway" id="UPA00940"/>
<dbReference type="Proteomes" id="UP000001107">
    <property type="component" value="Chromosome"/>
</dbReference>
<dbReference type="GO" id="GO:0005886">
    <property type="term" value="C:plasma membrane"/>
    <property type="evidence" value="ECO:0007669"/>
    <property type="project" value="UniProtKB-SubCell"/>
</dbReference>
<dbReference type="GO" id="GO:0047295">
    <property type="term" value="F:geranylgeranylglycerol-phosphate geranylgeranyltransferase activity"/>
    <property type="evidence" value="ECO:0007669"/>
    <property type="project" value="UniProtKB-UniRule"/>
</dbReference>
<dbReference type="GO" id="GO:0000287">
    <property type="term" value="F:magnesium ion binding"/>
    <property type="evidence" value="ECO:0007669"/>
    <property type="project" value="UniProtKB-UniRule"/>
</dbReference>
<dbReference type="GO" id="GO:0046474">
    <property type="term" value="P:glycerophospholipid biosynthetic process"/>
    <property type="evidence" value="ECO:0007669"/>
    <property type="project" value="UniProtKB-UniRule"/>
</dbReference>
<dbReference type="CDD" id="cd13961">
    <property type="entry name" value="PT_UbiA_DGGGPS"/>
    <property type="match status" value="1"/>
</dbReference>
<dbReference type="Gene3D" id="1.10.357.140">
    <property type="entry name" value="UbiA prenyltransferase"/>
    <property type="match status" value="1"/>
</dbReference>
<dbReference type="Gene3D" id="1.20.120.1780">
    <property type="entry name" value="UbiA prenyltransferase"/>
    <property type="match status" value="1"/>
</dbReference>
<dbReference type="HAMAP" id="MF_01286">
    <property type="entry name" value="DGGGP_synth"/>
    <property type="match status" value="1"/>
</dbReference>
<dbReference type="InterPro" id="IPR023547">
    <property type="entry name" value="DGGGP_synth"/>
</dbReference>
<dbReference type="InterPro" id="IPR050475">
    <property type="entry name" value="Prenyltransferase_related"/>
</dbReference>
<dbReference type="InterPro" id="IPR000537">
    <property type="entry name" value="UbiA_prenyltransferase"/>
</dbReference>
<dbReference type="InterPro" id="IPR044878">
    <property type="entry name" value="UbiA_sf"/>
</dbReference>
<dbReference type="PANTHER" id="PTHR42723">
    <property type="entry name" value="CHLOROPHYLL SYNTHASE"/>
    <property type="match status" value="1"/>
</dbReference>
<dbReference type="PANTHER" id="PTHR42723:SF1">
    <property type="entry name" value="CHLOROPHYLL SYNTHASE, CHLOROPLASTIC"/>
    <property type="match status" value="1"/>
</dbReference>
<dbReference type="Pfam" id="PF01040">
    <property type="entry name" value="UbiA"/>
    <property type="match status" value="1"/>
</dbReference>
<proteinExistence type="inferred from homology"/>
<accession>A6UQV8</accession>
<keyword id="KW-1003">Cell membrane</keyword>
<keyword id="KW-0444">Lipid biosynthesis</keyword>
<keyword id="KW-0443">Lipid metabolism</keyword>
<keyword id="KW-0460">Magnesium</keyword>
<keyword id="KW-0472">Membrane</keyword>
<keyword id="KW-0594">Phospholipid biosynthesis</keyword>
<keyword id="KW-1208">Phospholipid metabolism</keyword>
<keyword id="KW-0808">Transferase</keyword>
<keyword id="KW-0812">Transmembrane</keyword>
<keyword id="KW-1133">Transmembrane helix</keyword>
<protein>
    <recommendedName>
        <fullName evidence="1">Digeranylgeranylglyceryl phosphate synthase</fullName>
        <shortName evidence="1">DGGGP synthase</shortName>
        <shortName evidence="1">DGGGPS</shortName>
        <ecNumber evidence="1">2.5.1.42</ecNumber>
    </recommendedName>
    <alternativeName>
        <fullName evidence="1">(S)-2,3-di-O-geranylgeranylglyceryl phosphate synthase</fullName>
    </alternativeName>
    <alternativeName>
        <fullName evidence="1">Geranylgeranylglycerol-phosphate geranylgeranyltransferase</fullName>
    </alternativeName>
</protein>
<comment type="function">
    <text evidence="1">Prenyltransferase that catalyzes the transfer of the geranylgeranyl moiety of geranylgeranyl diphosphate (GGPP) to the C2 hydroxyl of (S)-3-O-geranylgeranylglyceryl phosphate (GGGP). This reaction is the second ether-bond-formation step in the biosynthesis of archaeal membrane lipids.</text>
</comment>
<comment type="catalytic activity">
    <reaction evidence="1">
        <text>sn-3-O-(geranylgeranyl)glycerol 1-phosphate + (2E,6E,10E)-geranylgeranyl diphosphate = 2,3-bis-O-(geranylgeranyl)-sn-glycerol 1-phosphate + diphosphate</text>
        <dbReference type="Rhea" id="RHEA:18109"/>
        <dbReference type="ChEBI" id="CHEBI:33019"/>
        <dbReference type="ChEBI" id="CHEBI:57677"/>
        <dbReference type="ChEBI" id="CHEBI:58756"/>
        <dbReference type="ChEBI" id="CHEBI:58837"/>
        <dbReference type="EC" id="2.5.1.42"/>
    </reaction>
</comment>
<comment type="cofactor">
    <cofactor evidence="1">
        <name>Mg(2+)</name>
        <dbReference type="ChEBI" id="CHEBI:18420"/>
    </cofactor>
</comment>
<comment type="pathway">
    <text evidence="1">Membrane lipid metabolism; glycerophospholipid metabolism.</text>
</comment>
<comment type="subcellular location">
    <subcellularLocation>
        <location evidence="1">Cell membrane</location>
        <topology evidence="1">Multi-pass membrane protein</topology>
    </subcellularLocation>
</comment>
<comment type="similarity">
    <text evidence="1">Belongs to the UbiA prenyltransferase family. DGGGP synthase subfamily.</text>
</comment>